<proteinExistence type="evidence at protein level"/>
<protein>
    <recommendedName>
        <fullName>Endospore coat-associated protein YheD</fullName>
    </recommendedName>
</protein>
<comment type="function">
    <text evidence="1">Involved in sporulation.</text>
</comment>
<comment type="subcellular location">
    <subcellularLocation>
        <location evidence="1">Forespore outer membrane</location>
        <topology evidence="1">Peripheral membrane protein</topology>
    </subcellularLocation>
    <subcellularLocation>
        <location evidence="1">Spore coat</location>
    </subcellularLocation>
    <text>Forms two rings around the forespore that are offset from its midpoint, before it eventually redistributes to form a shell around the developing spore.</text>
</comment>
<comment type="developmental stage">
    <text evidence="1">Expressed during sporulation (at protein level).</text>
</comment>
<comment type="similarity">
    <text evidence="2">Belongs to the YheC/YheD family.</text>
</comment>
<name>YHED_BACSU</name>
<reference key="1">
    <citation type="journal article" date="1998" name="Microbiology">
        <title>The 172 kb prkA-addAB region from 83 degrees to 97 degrees of the Bacillus subtilis chromosome contains several dysfunctional genes, the glyB marker, many genes encoding transporter proteins, and the ubiquitous hit gene.</title>
        <authorList>
            <person name="Noback M.A."/>
            <person name="Holsappel S."/>
            <person name="Kiewiet R."/>
            <person name="Terpstra P."/>
            <person name="Wambutt R."/>
            <person name="Wedler H."/>
            <person name="Venema G."/>
            <person name="Bron S."/>
        </authorList>
    </citation>
    <scope>NUCLEOTIDE SEQUENCE [GENOMIC DNA]</scope>
    <source>
        <strain>168</strain>
    </source>
</reference>
<reference key="2">
    <citation type="journal article" date="1997" name="Nature">
        <title>The complete genome sequence of the Gram-positive bacterium Bacillus subtilis.</title>
        <authorList>
            <person name="Kunst F."/>
            <person name="Ogasawara N."/>
            <person name="Moszer I."/>
            <person name="Albertini A.M."/>
            <person name="Alloni G."/>
            <person name="Azevedo V."/>
            <person name="Bertero M.G."/>
            <person name="Bessieres P."/>
            <person name="Bolotin A."/>
            <person name="Borchert S."/>
            <person name="Borriss R."/>
            <person name="Boursier L."/>
            <person name="Brans A."/>
            <person name="Braun M."/>
            <person name="Brignell S.C."/>
            <person name="Bron S."/>
            <person name="Brouillet S."/>
            <person name="Bruschi C.V."/>
            <person name="Caldwell B."/>
            <person name="Capuano V."/>
            <person name="Carter N.M."/>
            <person name="Choi S.-K."/>
            <person name="Codani J.-J."/>
            <person name="Connerton I.F."/>
            <person name="Cummings N.J."/>
            <person name="Daniel R.A."/>
            <person name="Denizot F."/>
            <person name="Devine K.M."/>
            <person name="Duesterhoeft A."/>
            <person name="Ehrlich S.D."/>
            <person name="Emmerson P.T."/>
            <person name="Entian K.-D."/>
            <person name="Errington J."/>
            <person name="Fabret C."/>
            <person name="Ferrari E."/>
            <person name="Foulger D."/>
            <person name="Fritz C."/>
            <person name="Fujita M."/>
            <person name="Fujita Y."/>
            <person name="Fuma S."/>
            <person name="Galizzi A."/>
            <person name="Galleron N."/>
            <person name="Ghim S.-Y."/>
            <person name="Glaser P."/>
            <person name="Goffeau A."/>
            <person name="Golightly E.J."/>
            <person name="Grandi G."/>
            <person name="Guiseppi G."/>
            <person name="Guy B.J."/>
            <person name="Haga K."/>
            <person name="Haiech J."/>
            <person name="Harwood C.R."/>
            <person name="Henaut A."/>
            <person name="Hilbert H."/>
            <person name="Holsappel S."/>
            <person name="Hosono S."/>
            <person name="Hullo M.-F."/>
            <person name="Itaya M."/>
            <person name="Jones L.-M."/>
            <person name="Joris B."/>
            <person name="Karamata D."/>
            <person name="Kasahara Y."/>
            <person name="Klaerr-Blanchard M."/>
            <person name="Klein C."/>
            <person name="Kobayashi Y."/>
            <person name="Koetter P."/>
            <person name="Koningstein G."/>
            <person name="Krogh S."/>
            <person name="Kumano M."/>
            <person name="Kurita K."/>
            <person name="Lapidus A."/>
            <person name="Lardinois S."/>
            <person name="Lauber J."/>
            <person name="Lazarevic V."/>
            <person name="Lee S.-M."/>
            <person name="Levine A."/>
            <person name="Liu H."/>
            <person name="Masuda S."/>
            <person name="Mauel C."/>
            <person name="Medigue C."/>
            <person name="Medina N."/>
            <person name="Mellado R.P."/>
            <person name="Mizuno M."/>
            <person name="Moestl D."/>
            <person name="Nakai S."/>
            <person name="Noback M."/>
            <person name="Noone D."/>
            <person name="O'Reilly M."/>
            <person name="Ogawa K."/>
            <person name="Ogiwara A."/>
            <person name="Oudega B."/>
            <person name="Park S.-H."/>
            <person name="Parro V."/>
            <person name="Pohl T.M."/>
            <person name="Portetelle D."/>
            <person name="Porwollik S."/>
            <person name="Prescott A.M."/>
            <person name="Presecan E."/>
            <person name="Pujic P."/>
            <person name="Purnelle B."/>
            <person name="Rapoport G."/>
            <person name="Rey M."/>
            <person name="Reynolds S."/>
            <person name="Rieger M."/>
            <person name="Rivolta C."/>
            <person name="Rocha E."/>
            <person name="Roche B."/>
            <person name="Rose M."/>
            <person name="Sadaie Y."/>
            <person name="Sato T."/>
            <person name="Scanlan E."/>
            <person name="Schleich S."/>
            <person name="Schroeter R."/>
            <person name="Scoffone F."/>
            <person name="Sekiguchi J."/>
            <person name="Sekowska A."/>
            <person name="Seror S.J."/>
            <person name="Serror P."/>
            <person name="Shin B.-S."/>
            <person name="Soldo B."/>
            <person name="Sorokin A."/>
            <person name="Tacconi E."/>
            <person name="Takagi T."/>
            <person name="Takahashi H."/>
            <person name="Takemaru K."/>
            <person name="Takeuchi M."/>
            <person name="Tamakoshi A."/>
            <person name="Tanaka T."/>
            <person name="Terpstra P."/>
            <person name="Tognoni A."/>
            <person name="Tosato V."/>
            <person name="Uchiyama S."/>
            <person name="Vandenbol M."/>
            <person name="Vannier F."/>
            <person name="Vassarotti A."/>
            <person name="Viari A."/>
            <person name="Wambutt R."/>
            <person name="Wedler E."/>
            <person name="Wedler H."/>
            <person name="Weitzenegger T."/>
            <person name="Winters P."/>
            <person name="Wipat A."/>
            <person name="Yamamoto H."/>
            <person name="Yamane K."/>
            <person name="Yasumoto K."/>
            <person name="Yata K."/>
            <person name="Yoshida K."/>
            <person name="Yoshikawa H.-F."/>
            <person name="Zumstein E."/>
            <person name="Yoshikawa H."/>
            <person name="Danchin A."/>
        </authorList>
    </citation>
    <scope>NUCLEOTIDE SEQUENCE [LARGE SCALE GENOMIC DNA]</scope>
    <source>
        <strain>168</strain>
    </source>
</reference>
<reference key="3">
    <citation type="journal article" date="2009" name="Microbiology">
        <title>From a consortium sequence to a unified sequence: the Bacillus subtilis 168 reference genome a decade later.</title>
        <authorList>
            <person name="Barbe V."/>
            <person name="Cruveiller S."/>
            <person name="Kunst F."/>
            <person name="Lenoble P."/>
            <person name="Meurice G."/>
            <person name="Sekowska A."/>
            <person name="Vallenet D."/>
            <person name="Wang T."/>
            <person name="Moszer I."/>
            <person name="Medigue C."/>
            <person name="Danchin A."/>
        </authorList>
    </citation>
    <scope>SEQUENCE REVISION TO 36</scope>
</reference>
<reference key="4">
    <citation type="journal article" date="2004" name="J. Bacteriol.">
        <title>Dynamic patterns of subcellular protein localization during spore coat morphogenesis in Bacillus subtilis.</title>
        <authorList>
            <person name="van Ooij C."/>
            <person name="Eichenberger P."/>
            <person name="Losick R."/>
        </authorList>
    </citation>
    <scope>FUNCTION</scope>
    <scope>DEVELOPMENTAL STAGE</scope>
    <scope>SUBCELLULAR LOCATION</scope>
    <source>
        <strain>168 / PY79</strain>
    </source>
</reference>
<dbReference type="EMBL" id="Y14080">
    <property type="protein sequence ID" value="CAA74456.1"/>
    <property type="molecule type" value="Genomic_DNA"/>
</dbReference>
<dbReference type="EMBL" id="AL009126">
    <property type="protein sequence ID" value="CAB12816.2"/>
    <property type="molecule type" value="Genomic_DNA"/>
</dbReference>
<dbReference type="PIR" id="D69828">
    <property type="entry name" value="D69828"/>
</dbReference>
<dbReference type="RefSeq" id="WP_003245015.1">
    <property type="nucleotide sequence ID" value="NZ_OZ025638.1"/>
</dbReference>
<dbReference type="FunCoup" id="O07545">
    <property type="interactions" value="26"/>
</dbReference>
<dbReference type="STRING" id="224308.BSU09770"/>
<dbReference type="PaxDb" id="224308-BSU09770"/>
<dbReference type="EnsemblBacteria" id="CAB12816">
    <property type="protein sequence ID" value="CAB12816"/>
    <property type="gene ID" value="BSU_09770"/>
</dbReference>
<dbReference type="GeneID" id="936276"/>
<dbReference type="KEGG" id="bsu:BSU09770"/>
<dbReference type="PATRIC" id="fig|224308.179.peg.1050"/>
<dbReference type="eggNOG" id="COG0189">
    <property type="taxonomic scope" value="Bacteria"/>
</dbReference>
<dbReference type="InParanoid" id="O07545"/>
<dbReference type="OrthoDB" id="7869153at2"/>
<dbReference type="PhylomeDB" id="O07545"/>
<dbReference type="BioCyc" id="BSUB:BSU09770-MONOMER"/>
<dbReference type="Proteomes" id="UP000001570">
    <property type="component" value="Chromosome"/>
</dbReference>
<dbReference type="GO" id="GO:0042601">
    <property type="term" value="C:endospore-forming forespore"/>
    <property type="evidence" value="ECO:0000314"/>
    <property type="project" value="CACAO"/>
</dbReference>
<dbReference type="GO" id="GO:0016020">
    <property type="term" value="C:membrane"/>
    <property type="evidence" value="ECO:0007669"/>
    <property type="project" value="UniProtKB-KW"/>
</dbReference>
<dbReference type="GO" id="GO:0030435">
    <property type="term" value="P:sporulation resulting in formation of a cellular spore"/>
    <property type="evidence" value="ECO:0007669"/>
    <property type="project" value="UniProtKB-KW"/>
</dbReference>
<dbReference type="Gene3D" id="3.30.470.20">
    <property type="entry name" value="ATP-grasp fold, B domain"/>
    <property type="match status" value="1"/>
</dbReference>
<dbReference type="InterPro" id="IPR026838">
    <property type="entry name" value="YheC/D"/>
</dbReference>
<dbReference type="Pfam" id="PF14398">
    <property type="entry name" value="ATPgrasp_YheCD"/>
    <property type="match status" value="1"/>
</dbReference>
<dbReference type="SUPFAM" id="SSF56059">
    <property type="entry name" value="Glutathione synthetase ATP-binding domain-like"/>
    <property type="match status" value="1"/>
</dbReference>
<evidence type="ECO:0000269" key="1">
    <source>
    </source>
</evidence>
<evidence type="ECO:0000305" key="2"/>
<feature type="chain" id="PRO_0000360435" description="Endospore coat-associated protein YheD">
    <location>
        <begin position="1"/>
        <end position="453"/>
    </location>
</feature>
<feature type="sequence conflict" description="In Ref. 1; CAA74456." evidence="2" ref="1">
    <original>T</original>
    <variation>R</variation>
    <location>
        <position position="36"/>
    </location>
</feature>
<keyword id="KW-0472">Membrane</keyword>
<keyword id="KW-1185">Reference proteome</keyword>
<keyword id="KW-0749">Sporulation</keyword>
<organism>
    <name type="scientific">Bacillus subtilis (strain 168)</name>
    <dbReference type="NCBI Taxonomy" id="224308"/>
    <lineage>
        <taxon>Bacteria</taxon>
        <taxon>Bacillati</taxon>
        <taxon>Bacillota</taxon>
        <taxon>Bacilli</taxon>
        <taxon>Bacillales</taxon>
        <taxon>Bacillaceae</taxon>
        <taxon>Bacillus</taxon>
    </lineage>
</organism>
<sequence length="453" mass="51304">MNPKRFLIGIDKTSENTLFLPSSLKQDGLLHAAFGTKVVRCHVAYRRHLEQTVLLSENLFHELLLPHRSRADILIHDHTVHIGPLVGIFTAGFTVSLERPFKDRSLFFSKLVTLHEQAGGYCFVFGAHQINWEEGTIEGLLYRENGWEKKIVPLPNVVYDRLPNRKIEDSLLLQHTKKRLIDEYQIPWFNKTFFNKWNVHQLLEKDPRTAPFLPRSELTPSVELIDELCGAYKKVYIKPANGALGTGIYQLTRTDGGLTVKHTNDAKTFTSIDYSDAASFLAEFQKHHNPSDFLIQQGVDLIEFQGKPADFRVHTNKNRKGKWTVTAIAVKISGKNSITTHLSNGGTVKTLAEVYDDPAERVEVIKKLSAAALTASHVLHDHIEGFIGEIGFDFGIDQNGKVWMFEANSRPGRSIFSHPNLHHVDSLTKRRSFEYASYLSEKAITSPEALWPS</sequence>
<accession>O07545</accession>
<accession>Q796W3</accession>
<gene>
    <name type="primary">yheD</name>
    <name type="ordered locus">BSU09770</name>
</gene>